<organism>
    <name type="scientific">Shouchella clausii (strain KSM-K16)</name>
    <name type="common">Alkalihalobacillus clausii</name>
    <dbReference type="NCBI Taxonomy" id="66692"/>
    <lineage>
        <taxon>Bacteria</taxon>
        <taxon>Bacillati</taxon>
        <taxon>Bacillota</taxon>
        <taxon>Bacilli</taxon>
        <taxon>Bacillales</taxon>
        <taxon>Bacillaceae</taxon>
        <taxon>Shouchella</taxon>
    </lineage>
</organism>
<protein>
    <recommendedName>
        <fullName evidence="1">Phosphate acyltransferase</fullName>
        <ecNumber evidence="1">2.3.1.274</ecNumber>
    </recommendedName>
    <alternativeName>
        <fullName evidence="1">Acyl-ACP phosphotransacylase</fullName>
    </alternativeName>
    <alternativeName>
        <fullName evidence="1">Acyl-[acyl-carrier-protein]--phosphate acyltransferase</fullName>
    </alternativeName>
    <alternativeName>
        <fullName evidence="1">Phosphate-acyl-ACP acyltransferase</fullName>
    </alternativeName>
</protein>
<name>PLSX_SHOC1</name>
<keyword id="KW-0963">Cytoplasm</keyword>
<keyword id="KW-0444">Lipid biosynthesis</keyword>
<keyword id="KW-0443">Lipid metabolism</keyword>
<keyword id="KW-0594">Phospholipid biosynthesis</keyword>
<keyword id="KW-1208">Phospholipid metabolism</keyword>
<keyword id="KW-1185">Reference proteome</keyword>
<keyword id="KW-0808">Transferase</keyword>
<feature type="chain" id="PRO_0000189846" description="Phosphate acyltransferase">
    <location>
        <begin position="1"/>
        <end position="329"/>
    </location>
</feature>
<accession>Q5WFM2</accession>
<sequence>MRIALDAMGGDNAPKAHVEAAIRAVQTFPELEVTLIGNEEQIRPHLTDTTRLTVIHTTEKIEDTDKPTTAVRRKKEASMVLCVKEVKEGNADACISSGNTGALMTAGLLYVGRIKGVERPGLAPTLPTIDGNGFLLLDAGANMDASPEHLLQYAIIGDAYRRNVYQQKNPRIGLLNVGAEAGKGTELTKQAYQLLENSSLHFIGNVEARDLFAGVCDIVVCDGFSGNVVLKSVEGTAKMVFSLLKEQLTSSLPAKLAAGMLKPQFRNLKEKMDYSEYGGAGLFGLKAPVIKAHGSSDANAVFHAIRQAKEMVDNEVTKTITQKLENGGE</sequence>
<dbReference type="EC" id="2.3.1.274" evidence="1"/>
<dbReference type="EMBL" id="AP006627">
    <property type="protein sequence ID" value="BAD64838.1"/>
    <property type="molecule type" value="Genomic_DNA"/>
</dbReference>
<dbReference type="RefSeq" id="WP_011247146.1">
    <property type="nucleotide sequence ID" value="NC_006582.1"/>
</dbReference>
<dbReference type="SMR" id="Q5WFM2"/>
<dbReference type="STRING" id="66692.ABC2303"/>
<dbReference type="KEGG" id="bcl:ABC2303"/>
<dbReference type="eggNOG" id="COG0416">
    <property type="taxonomic scope" value="Bacteria"/>
</dbReference>
<dbReference type="HOGENOM" id="CLU_039379_1_1_9"/>
<dbReference type="OrthoDB" id="9806408at2"/>
<dbReference type="UniPathway" id="UPA00085"/>
<dbReference type="Proteomes" id="UP000001168">
    <property type="component" value="Chromosome"/>
</dbReference>
<dbReference type="GO" id="GO:0005737">
    <property type="term" value="C:cytoplasm"/>
    <property type="evidence" value="ECO:0007669"/>
    <property type="project" value="UniProtKB-SubCell"/>
</dbReference>
<dbReference type="GO" id="GO:0043811">
    <property type="term" value="F:phosphate:acyl-[acyl carrier protein] acyltransferase activity"/>
    <property type="evidence" value="ECO:0007669"/>
    <property type="project" value="UniProtKB-UniRule"/>
</dbReference>
<dbReference type="GO" id="GO:0006633">
    <property type="term" value="P:fatty acid biosynthetic process"/>
    <property type="evidence" value="ECO:0007669"/>
    <property type="project" value="UniProtKB-UniRule"/>
</dbReference>
<dbReference type="GO" id="GO:0008654">
    <property type="term" value="P:phospholipid biosynthetic process"/>
    <property type="evidence" value="ECO:0007669"/>
    <property type="project" value="UniProtKB-KW"/>
</dbReference>
<dbReference type="Gene3D" id="3.40.718.10">
    <property type="entry name" value="Isopropylmalate Dehydrogenase"/>
    <property type="match status" value="1"/>
</dbReference>
<dbReference type="HAMAP" id="MF_00019">
    <property type="entry name" value="PlsX"/>
    <property type="match status" value="1"/>
</dbReference>
<dbReference type="InterPro" id="IPR003664">
    <property type="entry name" value="FA_synthesis"/>
</dbReference>
<dbReference type="InterPro" id="IPR012281">
    <property type="entry name" value="Phospholipid_synth_PlsX-like"/>
</dbReference>
<dbReference type="NCBIfam" id="TIGR00182">
    <property type="entry name" value="plsX"/>
    <property type="match status" value="1"/>
</dbReference>
<dbReference type="PANTHER" id="PTHR30100">
    <property type="entry name" value="FATTY ACID/PHOSPHOLIPID SYNTHESIS PROTEIN PLSX"/>
    <property type="match status" value="1"/>
</dbReference>
<dbReference type="PANTHER" id="PTHR30100:SF1">
    <property type="entry name" value="PHOSPHATE ACYLTRANSFERASE"/>
    <property type="match status" value="1"/>
</dbReference>
<dbReference type="Pfam" id="PF02504">
    <property type="entry name" value="FA_synthesis"/>
    <property type="match status" value="1"/>
</dbReference>
<dbReference type="PIRSF" id="PIRSF002465">
    <property type="entry name" value="Phsphlp_syn_PlsX"/>
    <property type="match status" value="1"/>
</dbReference>
<dbReference type="SUPFAM" id="SSF53659">
    <property type="entry name" value="Isocitrate/Isopropylmalate dehydrogenase-like"/>
    <property type="match status" value="1"/>
</dbReference>
<gene>
    <name evidence="1" type="primary">plsX</name>
    <name type="ordered locus">ABC2303</name>
</gene>
<comment type="function">
    <text evidence="1">Catalyzes the reversible formation of acyl-phosphate (acyl-PO(4)) from acyl-[acyl-carrier-protein] (acyl-ACP). This enzyme utilizes acyl-ACP as fatty acyl donor, but not acyl-CoA.</text>
</comment>
<comment type="catalytic activity">
    <reaction evidence="1">
        <text>a fatty acyl-[ACP] + phosphate = an acyl phosphate + holo-[ACP]</text>
        <dbReference type="Rhea" id="RHEA:42292"/>
        <dbReference type="Rhea" id="RHEA-COMP:9685"/>
        <dbReference type="Rhea" id="RHEA-COMP:14125"/>
        <dbReference type="ChEBI" id="CHEBI:43474"/>
        <dbReference type="ChEBI" id="CHEBI:59918"/>
        <dbReference type="ChEBI" id="CHEBI:64479"/>
        <dbReference type="ChEBI" id="CHEBI:138651"/>
        <dbReference type="EC" id="2.3.1.274"/>
    </reaction>
</comment>
<comment type="pathway">
    <text evidence="1">Lipid metabolism; phospholipid metabolism.</text>
</comment>
<comment type="subunit">
    <text evidence="1">Homodimer. Probably interacts with PlsY.</text>
</comment>
<comment type="subcellular location">
    <subcellularLocation>
        <location evidence="1">Cytoplasm</location>
    </subcellularLocation>
    <text evidence="1">Associated with the membrane possibly through PlsY.</text>
</comment>
<comment type="similarity">
    <text evidence="1">Belongs to the PlsX family.</text>
</comment>
<reference key="1">
    <citation type="submission" date="2003-10" db="EMBL/GenBank/DDBJ databases">
        <title>The complete genome sequence of the alkaliphilic Bacillus clausii KSM-K16.</title>
        <authorList>
            <person name="Takaki Y."/>
            <person name="Kageyama Y."/>
            <person name="Shimamura S."/>
            <person name="Suzuki H."/>
            <person name="Nishi S."/>
            <person name="Hatada Y."/>
            <person name="Kawai S."/>
            <person name="Ito S."/>
            <person name="Horikoshi K."/>
        </authorList>
    </citation>
    <scope>NUCLEOTIDE SEQUENCE [LARGE SCALE GENOMIC DNA]</scope>
    <source>
        <strain>KSM-K16</strain>
    </source>
</reference>
<proteinExistence type="inferred from homology"/>
<evidence type="ECO:0000255" key="1">
    <source>
        <dbReference type="HAMAP-Rule" id="MF_00019"/>
    </source>
</evidence>